<evidence type="ECO:0000255" key="1">
    <source>
        <dbReference type="HAMAP-Rule" id="MF_01014"/>
    </source>
</evidence>
<comment type="catalytic activity">
    <reaction evidence="1">
        <text>1-(5-phospho-beta-D-ribosyl)-5-[(5-phospho-beta-D-ribosylamino)methylideneamino]imidazole-4-carboxamide = 5-[(5-phospho-1-deoxy-D-ribulos-1-ylimino)methylamino]-1-(5-phospho-beta-D-ribosyl)imidazole-4-carboxamide</text>
        <dbReference type="Rhea" id="RHEA:15469"/>
        <dbReference type="ChEBI" id="CHEBI:58435"/>
        <dbReference type="ChEBI" id="CHEBI:58525"/>
        <dbReference type="EC" id="5.3.1.16"/>
    </reaction>
</comment>
<comment type="pathway">
    <text evidence="1">Amino-acid biosynthesis; L-histidine biosynthesis; L-histidine from 5-phospho-alpha-D-ribose 1-diphosphate: step 4/9.</text>
</comment>
<comment type="subcellular location">
    <subcellularLocation>
        <location evidence="1">Cytoplasm</location>
    </subcellularLocation>
</comment>
<comment type="similarity">
    <text evidence="1">Belongs to the HisA/HisF family.</text>
</comment>
<keyword id="KW-0028">Amino-acid biosynthesis</keyword>
<keyword id="KW-0963">Cytoplasm</keyword>
<keyword id="KW-0368">Histidine biosynthesis</keyword>
<keyword id="KW-0413">Isomerase</keyword>
<keyword id="KW-1185">Reference proteome</keyword>
<reference key="1">
    <citation type="journal article" date="2005" name="Genome Res.">
        <title>Coping with cold: the genome of the versatile marine Antarctica bacterium Pseudoalteromonas haloplanktis TAC125.</title>
        <authorList>
            <person name="Medigue C."/>
            <person name="Krin E."/>
            <person name="Pascal G."/>
            <person name="Barbe V."/>
            <person name="Bernsel A."/>
            <person name="Bertin P.N."/>
            <person name="Cheung F."/>
            <person name="Cruveiller S."/>
            <person name="D'Amico S."/>
            <person name="Duilio A."/>
            <person name="Fang G."/>
            <person name="Feller G."/>
            <person name="Ho C."/>
            <person name="Mangenot S."/>
            <person name="Marino G."/>
            <person name="Nilsson J."/>
            <person name="Parrilli E."/>
            <person name="Rocha E.P.C."/>
            <person name="Rouy Z."/>
            <person name="Sekowska A."/>
            <person name="Tutino M.L."/>
            <person name="Vallenet D."/>
            <person name="von Heijne G."/>
            <person name="Danchin A."/>
        </authorList>
    </citation>
    <scope>NUCLEOTIDE SEQUENCE [LARGE SCALE GENOMIC DNA]</scope>
    <source>
        <strain>TAC 125</strain>
    </source>
</reference>
<proteinExistence type="inferred from homology"/>
<accession>Q3ICF4</accession>
<organism>
    <name type="scientific">Pseudoalteromonas translucida (strain TAC 125)</name>
    <dbReference type="NCBI Taxonomy" id="326442"/>
    <lineage>
        <taxon>Bacteria</taxon>
        <taxon>Pseudomonadati</taxon>
        <taxon>Pseudomonadota</taxon>
        <taxon>Gammaproteobacteria</taxon>
        <taxon>Alteromonadales</taxon>
        <taxon>Pseudoalteromonadaceae</taxon>
        <taxon>Pseudoalteromonas</taxon>
    </lineage>
</organism>
<protein>
    <recommendedName>
        <fullName evidence="1">1-(5-phosphoribosyl)-5-[(5-phosphoribosylamino)methylideneamino] imidazole-4-carboxamide isomerase</fullName>
        <ecNumber evidence="1">5.3.1.16</ecNumber>
    </recommendedName>
    <alternativeName>
        <fullName evidence="1">Phosphoribosylformimino-5-aminoimidazole carboxamide ribotide isomerase</fullName>
    </alternativeName>
</protein>
<feature type="chain" id="PRO_0000229071" description="1-(5-phosphoribosyl)-5-[(5-phosphoribosylamino)methylideneamino] imidazole-4-carboxamide isomerase">
    <location>
        <begin position="1"/>
        <end position="242"/>
    </location>
</feature>
<feature type="active site" description="Proton acceptor" evidence="1">
    <location>
        <position position="7"/>
    </location>
</feature>
<feature type="active site" description="Proton donor" evidence="1">
    <location>
        <position position="129"/>
    </location>
</feature>
<sequence length="242" mass="26427">MIIPALDVLQNQIVRLYQGKYETVQFYPFELGARLKEYADSGAGKLHLVDLEGARDPSKKQWQHIQAATKALNVPYQVGGGIRCEQDVSDWLKAGANQVVIGSMAVEKREQVKAWIEQFGAEHFVIALDVNKTATGWAPATHGWLTESEFGLLELVDFYANLGVIDFLCTDISKDGTMTGPSFALYEDLIKHNSTIKVQASGGVSSLDDIKKLKELGIGGIILGKSLLDGAFSVEEALAVTR</sequence>
<dbReference type="EC" id="5.3.1.16" evidence="1"/>
<dbReference type="EMBL" id="CR954247">
    <property type="protein sequence ID" value="CAI89526.1"/>
    <property type="molecule type" value="Genomic_DNA"/>
</dbReference>
<dbReference type="SMR" id="Q3ICF4"/>
<dbReference type="STRING" id="326442.PSHAb0489"/>
<dbReference type="KEGG" id="pha:PSHAb0489"/>
<dbReference type="PATRIC" id="fig|326442.8.peg.3397"/>
<dbReference type="eggNOG" id="COG0106">
    <property type="taxonomic scope" value="Bacteria"/>
</dbReference>
<dbReference type="HOGENOM" id="CLU_048577_1_2_6"/>
<dbReference type="BioCyc" id="PHAL326442:PSHA_RS17185-MONOMER"/>
<dbReference type="UniPathway" id="UPA00031">
    <property type="reaction ID" value="UER00009"/>
</dbReference>
<dbReference type="Proteomes" id="UP000006843">
    <property type="component" value="Chromosome II"/>
</dbReference>
<dbReference type="GO" id="GO:0005737">
    <property type="term" value="C:cytoplasm"/>
    <property type="evidence" value="ECO:0007669"/>
    <property type="project" value="UniProtKB-SubCell"/>
</dbReference>
<dbReference type="GO" id="GO:0003949">
    <property type="term" value="F:1-(5-phosphoribosyl)-5-[(5-phosphoribosylamino)methylideneamino]imidazole-4-carboxamide isomerase activity"/>
    <property type="evidence" value="ECO:0007669"/>
    <property type="project" value="UniProtKB-UniRule"/>
</dbReference>
<dbReference type="GO" id="GO:0000105">
    <property type="term" value="P:L-histidine biosynthetic process"/>
    <property type="evidence" value="ECO:0007669"/>
    <property type="project" value="UniProtKB-UniRule"/>
</dbReference>
<dbReference type="GO" id="GO:0000162">
    <property type="term" value="P:L-tryptophan biosynthetic process"/>
    <property type="evidence" value="ECO:0007669"/>
    <property type="project" value="TreeGrafter"/>
</dbReference>
<dbReference type="CDD" id="cd04732">
    <property type="entry name" value="HisA"/>
    <property type="match status" value="1"/>
</dbReference>
<dbReference type="FunFam" id="3.20.20.70:FF:000009">
    <property type="entry name" value="1-(5-phosphoribosyl)-5-[(5-phosphoribosylamino)methylideneamino] imidazole-4-carboxamide isomerase"/>
    <property type="match status" value="1"/>
</dbReference>
<dbReference type="Gene3D" id="3.20.20.70">
    <property type="entry name" value="Aldolase class I"/>
    <property type="match status" value="1"/>
</dbReference>
<dbReference type="HAMAP" id="MF_01014">
    <property type="entry name" value="HisA"/>
    <property type="match status" value="1"/>
</dbReference>
<dbReference type="InterPro" id="IPR013785">
    <property type="entry name" value="Aldolase_TIM"/>
</dbReference>
<dbReference type="InterPro" id="IPR006062">
    <property type="entry name" value="His_biosynth"/>
</dbReference>
<dbReference type="InterPro" id="IPR044524">
    <property type="entry name" value="Isoase_HisA-like"/>
</dbReference>
<dbReference type="InterPro" id="IPR023016">
    <property type="entry name" value="Isoase_HisA-like_bact"/>
</dbReference>
<dbReference type="InterPro" id="IPR011060">
    <property type="entry name" value="RibuloseP-bd_barrel"/>
</dbReference>
<dbReference type="PANTHER" id="PTHR43090">
    <property type="entry name" value="1-(5-PHOSPHORIBOSYL)-5-[(5-PHOSPHORIBOSYLAMINO)METHYLIDENEAMINO] IMIDAZOLE-4-CARBOXAMIDE ISOMERASE"/>
    <property type="match status" value="1"/>
</dbReference>
<dbReference type="PANTHER" id="PTHR43090:SF2">
    <property type="entry name" value="1-(5-PHOSPHORIBOSYL)-5-[(5-PHOSPHORIBOSYLAMINO)METHYLIDENEAMINO] IMIDAZOLE-4-CARBOXAMIDE ISOMERASE"/>
    <property type="match status" value="1"/>
</dbReference>
<dbReference type="Pfam" id="PF00977">
    <property type="entry name" value="His_biosynth"/>
    <property type="match status" value="1"/>
</dbReference>
<dbReference type="SUPFAM" id="SSF51366">
    <property type="entry name" value="Ribulose-phoshate binding barrel"/>
    <property type="match status" value="1"/>
</dbReference>
<gene>
    <name evidence="1" type="primary">hisA</name>
    <name type="ordered locus">PSHAb0489</name>
</gene>
<name>HIS4_PSET1</name>